<reference key="1">
    <citation type="journal article" date="2006" name="Science">
        <title>A small microbial genome: the end of a long symbiotic relationship?</title>
        <authorList>
            <person name="Perez-Brocal V."/>
            <person name="Gil R."/>
            <person name="Ramos S."/>
            <person name="Lamelas A."/>
            <person name="Postigo M."/>
            <person name="Michelena J.M."/>
            <person name="Silva F.J."/>
            <person name="Moya A."/>
            <person name="Latorre A."/>
        </authorList>
    </citation>
    <scope>NUCLEOTIDE SEQUENCE [LARGE SCALE GENOMIC DNA]</scope>
    <source>
        <strain>Cc</strain>
    </source>
</reference>
<dbReference type="EC" id="4.2.1.11" evidence="1"/>
<dbReference type="EMBL" id="CP000263">
    <property type="protein sequence ID" value="ABJ90726.1"/>
    <property type="molecule type" value="Genomic_DNA"/>
</dbReference>
<dbReference type="RefSeq" id="WP_011672645.1">
    <property type="nucleotide sequence ID" value="NC_008513.1"/>
</dbReference>
<dbReference type="SMR" id="Q057H3"/>
<dbReference type="STRING" id="372461.BCc_264"/>
<dbReference type="KEGG" id="bcc:BCc_264"/>
<dbReference type="eggNOG" id="COG0148">
    <property type="taxonomic scope" value="Bacteria"/>
</dbReference>
<dbReference type="HOGENOM" id="CLU_031223_2_1_6"/>
<dbReference type="OrthoDB" id="9804716at2"/>
<dbReference type="UniPathway" id="UPA00109">
    <property type="reaction ID" value="UER00187"/>
</dbReference>
<dbReference type="Proteomes" id="UP000000669">
    <property type="component" value="Chromosome"/>
</dbReference>
<dbReference type="GO" id="GO:0009986">
    <property type="term" value="C:cell surface"/>
    <property type="evidence" value="ECO:0007669"/>
    <property type="project" value="UniProtKB-SubCell"/>
</dbReference>
<dbReference type="GO" id="GO:0005576">
    <property type="term" value="C:extracellular region"/>
    <property type="evidence" value="ECO:0007669"/>
    <property type="project" value="UniProtKB-SubCell"/>
</dbReference>
<dbReference type="GO" id="GO:0000015">
    <property type="term" value="C:phosphopyruvate hydratase complex"/>
    <property type="evidence" value="ECO:0007669"/>
    <property type="project" value="InterPro"/>
</dbReference>
<dbReference type="GO" id="GO:0000287">
    <property type="term" value="F:magnesium ion binding"/>
    <property type="evidence" value="ECO:0007669"/>
    <property type="project" value="UniProtKB-UniRule"/>
</dbReference>
<dbReference type="GO" id="GO:0004634">
    <property type="term" value="F:phosphopyruvate hydratase activity"/>
    <property type="evidence" value="ECO:0007669"/>
    <property type="project" value="UniProtKB-UniRule"/>
</dbReference>
<dbReference type="GO" id="GO:0006096">
    <property type="term" value="P:glycolytic process"/>
    <property type="evidence" value="ECO:0007669"/>
    <property type="project" value="UniProtKB-UniRule"/>
</dbReference>
<dbReference type="CDD" id="cd03313">
    <property type="entry name" value="enolase"/>
    <property type="match status" value="1"/>
</dbReference>
<dbReference type="FunFam" id="3.30.390.10:FF:000001">
    <property type="entry name" value="Enolase"/>
    <property type="match status" value="1"/>
</dbReference>
<dbReference type="Gene3D" id="3.20.20.120">
    <property type="entry name" value="Enolase-like C-terminal domain"/>
    <property type="match status" value="1"/>
</dbReference>
<dbReference type="Gene3D" id="3.30.390.10">
    <property type="entry name" value="Enolase-like, N-terminal domain"/>
    <property type="match status" value="1"/>
</dbReference>
<dbReference type="HAMAP" id="MF_00318">
    <property type="entry name" value="Enolase"/>
    <property type="match status" value="1"/>
</dbReference>
<dbReference type="InterPro" id="IPR000941">
    <property type="entry name" value="Enolase"/>
</dbReference>
<dbReference type="InterPro" id="IPR036849">
    <property type="entry name" value="Enolase-like_C_sf"/>
</dbReference>
<dbReference type="InterPro" id="IPR029017">
    <property type="entry name" value="Enolase-like_N"/>
</dbReference>
<dbReference type="InterPro" id="IPR020810">
    <property type="entry name" value="Enolase_C"/>
</dbReference>
<dbReference type="InterPro" id="IPR020809">
    <property type="entry name" value="Enolase_CS"/>
</dbReference>
<dbReference type="InterPro" id="IPR020811">
    <property type="entry name" value="Enolase_N"/>
</dbReference>
<dbReference type="NCBIfam" id="TIGR01060">
    <property type="entry name" value="eno"/>
    <property type="match status" value="1"/>
</dbReference>
<dbReference type="PANTHER" id="PTHR11902">
    <property type="entry name" value="ENOLASE"/>
    <property type="match status" value="1"/>
</dbReference>
<dbReference type="PANTHER" id="PTHR11902:SF1">
    <property type="entry name" value="ENOLASE"/>
    <property type="match status" value="1"/>
</dbReference>
<dbReference type="Pfam" id="PF00113">
    <property type="entry name" value="Enolase_C"/>
    <property type="match status" value="1"/>
</dbReference>
<dbReference type="Pfam" id="PF03952">
    <property type="entry name" value="Enolase_N"/>
    <property type="match status" value="1"/>
</dbReference>
<dbReference type="PIRSF" id="PIRSF001400">
    <property type="entry name" value="Enolase"/>
    <property type="match status" value="1"/>
</dbReference>
<dbReference type="PRINTS" id="PR00148">
    <property type="entry name" value="ENOLASE"/>
</dbReference>
<dbReference type="SFLD" id="SFLDF00002">
    <property type="entry name" value="enolase"/>
    <property type="match status" value="1"/>
</dbReference>
<dbReference type="SFLD" id="SFLDG00178">
    <property type="entry name" value="enolase"/>
    <property type="match status" value="1"/>
</dbReference>
<dbReference type="SMART" id="SM01192">
    <property type="entry name" value="Enolase_C"/>
    <property type="match status" value="1"/>
</dbReference>
<dbReference type="SMART" id="SM01193">
    <property type="entry name" value="Enolase_N"/>
    <property type="match status" value="1"/>
</dbReference>
<dbReference type="SUPFAM" id="SSF51604">
    <property type="entry name" value="Enolase C-terminal domain-like"/>
    <property type="match status" value="1"/>
</dbReference>
<dbReference type="SUPFAM" id="SSF54826">
    <property type="entry name" value="Enolase N-terminal domain-like"/>
    <property type="match status" value="1"/>
</dbReference>
<dbReference type="PROSITE" id="PS00164">
    <property type="entry name" value="ENOLASE"/>
    <property type="match status" value="1"/>
</dbReference>
<protein>
    <recommendedName>
        <fullName evidence="1">Enolase</fullName>
        <ecNumber evidence="1">4.2.1.11</ecNumber>
    </recommendedName>
    <alternativeName>
        <fullName evidence="1">2-phospho-D-glycerate hydro-lyase</fullName>
    </alternativeName>
    <alternativeName>
        <fullName evidence="1">2-phosphoglycerate dehydratase</fullName>
    </alternativeName>
</protein>
<comment type="function">
    <text evidence="1">Catalyzes the reversible conversion of 2-phosphoglycerate (2-PG) into phosphoenolpyruvate (PEP). It is essential for the degradation of carbohydrates via glycolysis.</text>
</comment>
<comment type="catalytic activity">
    <reaction evidence="1">
        <text>(2R)-2-phosphoglycerate = phosphoenolpyruvate + H2O</text>
        <dbReference type="Rhea" id="RHEA:10164"/>
        <dbReference type="ChEBI" id="CHEBI:15377"/>
        <dbReference type="ChEBI" id="CHEBI:58289"/>
        <dbReference type="ChEBI" id="CHEBI:58702"/>
        <dbReference type="EC" id="4.2.1.11"/>
    </reaction>
</comment>
<comment type="cofactor">
    <cofactor evidence="1">
        <name>Mg(2+)</name>
        <dbReference type="ChEBI" id="CHEBI:18420"/>
    </cofactor>
    <text evidence="1">Binds a second Mg(2+) ion via substrate during catalysis.</text>
</comment>
<comment type="pathway">
    <text evidence="1">Carbohydrate degradation; glycolysis; pyruvate from D-glyceraldehyde 3-phosphate: step 4/5.</text>
</comment>
<comment type="subunit">
    <text evidence="1">Component of the RNA degradosome, a multiprotein complex involved in RNA processing and mRNA degradation.</text>
</comment>
<comment type="subcellular location">
    <subcellularLocation>
        <location evidence="1">Cytoplasm</location>
    </subcellularLocation>
    <subcellularLocation>
        <location evidence="1">Secreted</location>
    </subcellularLocation>
    <subcellularLocation>
        <location evidence="1">Cell surface</location>
    </subcellularLocation>
    <text evidence="1">Fractions of enolase are present in both the cytoplasm and on the cell surface.</text>
</comment>
<comment type="similarity">
    <text evidence="1">Belongs to the enolase family.</text>
</comment>
<keyword id="KW-0963">Cytoplasm</keyword>
<keyword id="KW-0324">Glycolysis</keyword>
<keyword id="KW-0456">Lyase</keyword>
<keyword id="KW-0460">Magnesium</keyword>
<keyword id="KW-0479">Metal-binding</keyword>
<keyword id="KW-1185">Reference proteome</keyword>
<keyword id="KW-0964">Secreted</keyword>
<sequence>MSKIKKILSREILDSRGYPTIETEVHLKTGYFGYSSVPSGASTGSKEALELRDNDKNRFFGKGVKKAVNYVNTEIFQALKNKNAEEQKELDNLMIKLDGTKNKSRFGANAILSVSLSLAKAIALEKNIPFYSYISEINYSKNNFSIPLPMINIINGGMHANNNIDLQEFMIQPIGAKSILQAVQMGSEIFHMLGIILKEKGYSTCVGDEGGYAPNLKSNEEALSMISLAVERSNYKLNEDITFAIDCASSELFNKKTRRYRLKNENKEYNSIEFTHYLEKLTKKYPIRSIEDGQDESDWKGFQYQTKILGKKIQLVGDDLFVTNKKFLEYGIKKKAANSILIKLNQIGTLTETLETIKKAQENKYNVIISHRSGETEDTSIADLAVGTNAGQIKTGSMCRSDRTSKYNRLIKIEESLNTQKKTFKKKLNLFN</sequence>
<proteinExistence type="inferred from homology"/>
<accession>Q057H3</accession>
<name>ENO_BUCCC</name>
<organism>
    <name type="scientific">Buchnera aphidicola subsp. Cinara cedri (strain Cc)</name>
    <dbReference type="NCBI Taxonomy" id="372461"/>
    <lineage>
        <taxon>Bacteria</taxon>
        <taxon>Pseudomonadati</taxon>
        <taxon>Pseudomonadota</taxon>
        <taxon>Gammaproteobacteria</taxon>
        <taxon>Enterobacterales</taxon>
        <taxon>Erwiniaceae</taxon>
        <taxon>Buchnera</taxon>
    </lineage>
</organism>
<feature type="chain" id="PRO_0000280837" description="Enolase">
    <location>
        <begin position="1"/>
        <end position="432"/>
    </location>
</feature>
<feature type="active site" description="Proton donor" evidence="1">
    <location>
        <position position="209"/>
    </location>
</feature>
<feature type="active site" description="Proton acceptor" evidence="1">
    <location>
        <position position="343"/>
    </location>
</feature>
<feature type="binding site" evidence="1">
    <location>
        <position position="167"/>
    </location>
    <ligand>
        <name>(2R)-2-phosphoglycerate</name>
        <dbReference type="ChEBI" id="CHEBI:58289"/>
    </ligand>
</feature>
<feature type="binding site" evidence="1">
    <location>
        <position position="246"/>
    </location>
    <ligand>
        <name>Mg(2+)</name>
        <dbReference type="ChEBI" id="CHEBI:18420"/>
    </ligand>
</feature>
<feature type="binding site" evidence="1">
    <location>
        <position position="291"/>
    </location>
    <ligand>
        <name>Mg(2+)</name>
        <dbReference type="ChEBI" id="CHEBI:18420"/>
    </ligand>
</feature>
<feature type="binding site" evidence="1">
    <location>
        <position position="318"/>
    </location>
    <ligand>
        <name>Mg(2+)</name>
        <dbReference type="ChEBI" id="CHEBI:18420"/>
    </ligand>
</feature>
<feature type="binding site" evidence="1">
    <location>
        <position position="343"/>
    </location>
    <ligand>
        <name>(2R)-2-phosphoglycerate</name>
        <dbReference type="ChEBI" id="CHEBI:58289"/>
    </ligand>
</feature>
<feature type="binding site" evidence="1">
    <location>
        <position position="372"/>
    </location>
    <ligand>
        <name>(2R)-2-phosphoglycerate</name>
        <dbReference type="ChEBI" id="CHEBI:58289"/>
    </ligand>
</feature>
<feature type="binding site" evidence="1">
    <location>
        <position position="373"/>
    </location>
    <ligand>
        <name>(2R)-2-phosphoglycerate</name>
        <dbReference type="ChEBI" id="CHEBI:58289"/>
    </ligand>
</feature>
<feature type="binding site" evidence="1">
    <location>
        <position position="394"/>
    </location>
    <ligand>
        <name>(2R)-2-phosphoglycerate</name>
        <dbReference type="ChEBI" id="CHEBI:58289"/>
    </ligand>
</feature>
<gene>
    <name evidence="1" type="primary">eno</name>
    <name type="ordered locus">BCc_264</name>
</gene>
<evidence type="ECO:0000255" key="1">
    <source>
        <dbReference type="HAMAP-Rule" id="MF_00318"/>
    </source>
</evidence>